<proteinExistence type="inferred from homology"/>
<dbReference type="EC" id="6.3.2.3" evidence="2"/>
<dbReference type="EMBL" id="AE014075">
    <property type="protein sequence ID" value="AAN81981.1"/>
    <property type="molecule type" value="Genomic_DNA"/>
</dbReference>
<dbReference type="RefSeq" id="WP_000593261.1">
    <property type="nucleotide sequence ID" value="NZ_CP051263.1"/>
</dbReference>
<dbReference type="SMR" id="Q8FE30"/>
<dbReference type="STRING" id="199310.c3533"/>
<dbReference type="KEGG" id="ecc:c3533"/>
<dbReference type="eggNOG" id="COG0189">
    <property type="taxonomic scope" value="Bacteria"/>
</dbReference>
<dbReference type="HOGENOM" id="CLU_068239_0_0_6"/>
<dbReference type="BioCyc" id="ECOL199310:C3533-MONOMER"/>
<dbReference type="UniPathway" id="UPA00142">
    <property type="reaction ID" value="UER00210"/>
</dbReference>
<dbReference type="Proteomes" id="UP000001410">
    <property type="component" value="Chromosome"/>
</dbReference>
<dbReference type="GO" id="GO:0005737">
    <property type="term" value="C:cytoplasm"/>
    <property type="evidence" value="ECO:0007669"/>
    <property type="project" value="TreeGrafter"/>
</dbReference>
<dbReference type="GO" id="GO:0005524">
    <property type="term" value="F:ATP binding"/>
    <property type="evidence" value="ECO:0007669"/>
    <property type="project" value="UniProtKB-UniRule"/>
</dbReference>
<dbReference type="GO" id="GO:0004363">
    <property type="term" value="F:glutathione synthase activity"/>
    <property type="evidence" value="ECO:0007669"/>
    <property type="project" value="UniProtKB-UniRule"/>
</dbReference>
<dbReference type="GO" id="GO:0046872">
    <property type="term" value="F:metal ion binding"/>
    <property type="evidence" value="ECO:0007669"/>
    <property type="project" value="UniProtKB-KW"/>
</dbReference>
<dbReference type="FunFam" id="3.30.1490.20:FF:000009">
    <property type="entry name" value="Glutathione synthetase"/>
    <property type="match status" value="1"/>
</dbReference>
<dbReference type="FunFam" id="3.30.470.20:FF:000010">
    <property type="entry name" value="Glutathione synthetase"/>
    <property type="match status" value="1"/>
</dbReference>
<dbReference type="FunFam" id="3.40.50.20:FF:000009">
    <property type="entry name" value="Glutathione synthetase"/>
    <property type="match status" value="1"/>
</dbReference>
<dbReference type="Gene3D" id="3.40.50.20">
    <property type="match status" value="1"/>
</dbReference>
<dbReference type="Gene3D" id="3.30.1490.20">
    <property type="entry name" value="ATP-grasp fold, A domain"/>
    <property type="match status" value="1"/>
</dbReference>
<dbReference type="Gene3D" id="3.30.470.20">
    <property type="entry name" value="ATP-grasp fold, B domain"/>
    <property type="match status" value="1"/>
</dbReference>
<dbReference type="HAMAP" id="MF_00162">
    <property type="entry name" value="GSH_S"/>
    <property type="match status" value="1"/>
</dbReference>
<dbReference type="InterPro" id="IPR011761">
    <property type="entry name" value="ATP-grasp"/>
</dbReference>
<dbReference type="InterPro" id="IPR013815">
    <property type="entry name" value="ATP_grasp_subdomain_1"/>
</dbReference>
<dbReference type="InterPro" id="IPR006284">
    <property type="entry name" value="Glut_synth_pro"/>
</dbReference>
<dbReference type="InterPro" id="IPR004218">
    <property type="entry name" value="GSHS_ATP-bd"/>
</dbReference>
<dbReference type="InterPro" id="IPR004215">
    <property type="entry name" value="GSHS_N"/>
</dbReference>
<dbReference type="InterPro" id="IPR016185">
    <property type="entry name" value="PreATP-grasp_dom_sf"/>
</dbReference>
<dbReference type="NCBIfam" id="TIGR01380">
    <property type="entry name" value="glut_syn"/>
    <property type="match status" value="1"/>
</dbReference>
<dbReference type="NCBIfam" id="NF003573">
    <property type="entry name" value="PRK05246.1"/>
    <property type="match status" value="1"/>
</dbReference>
<dbReference type="PANTHER" id="PTHR21621:SF4">
    <property type="entry name" value="GLUTATHIONE SYNTHETASE"/>
    <property type="match status" value="1"/>
</dbReference>
<dbReference type="PANTHER" id="PTHR21621">
    <property type="entry name" value="RIBOSOMAL PROTEIN S6 MODIFICATION PROTEIN"/>
    <property type="match status" value="1"/>
</dbReference>
<dbReference type="Pfam" id="PF02955">
    <property type="entry name" value="GSH-S_ATP"/>
    <property type="match status" value="1"/>
</dbReference>
<dbReference type="Pfam" id="PF02951">
    <property type="entry name" value="GSH-S_N"/>
    <property type="match status" value="1"/>
</dbReference>
<dbReference type="SUPFAM" id="SSF56059">
    <property type="entry name" value="Glutathione synthetase ATP-binding domain-like"/>
    <property type="match status" value="1"/>
</dbReference>
<dbReference type="SUPFAM" id="SSF52440">
    <property type="entry name" value="PreATP-grasp domain"/>
    <property type="match status" value="1"/>
</dbReference>
<dbReference type="PROSITE" id="PS50975">
    <property type="entry name" value="ATP_GRASP"/>
    <property type="match status" value="1"/>
</dbReference>
<evidence type="ECO:0000250" key="1"/>
<evidence type="ECO:0000255" key="2">
    <source>
        <dbReference type="HAMAP-Rule" id="MF_00162"/>
    </source>
</evidence>
<organism>
    <name type="scientific">Escherichia coli O6:H1 (strain CFT073 / ATCC 700928 / UPEC)</name>
    <dbReference type="NCBI Taxonomy" id="199310"/>
    <lineage>
        <taxon>Bacteria</taxon>
        <taxon>Pseudomonadati</taxon>
        <taxon>Pseudomonadota</taxon>
        <taxon>Gammaproteobacteria</taxon>
        <taxon>Enterobacterales</taxon>
        <taxon>Enterobacteriaceae</taxon>
        <taxon>Escherichia</taxon>
    </lineage>
</organism>
<comment type="catalytic activity">
    <reaction evidence="2">
        <text>gamma-L-glutamyl-L-cysteine + glycine + ATP = glutathione + ADP + phosphate + H(+)</text>
        <dbReference type="Rhea" id="RHEA:13557"/>
        <dbReference type="ChEBI" id="CHEBI:15378"/>
        <dbReference type="ChEBI" id="CHEBI:30616"/>
        <dbReference type="ChEBI" id="CHEBI:43474"/>
        <dbReference type="ChEBI" id="CHEBI:57305"/>
        <dbReference type="ChEBI" id="CHEBI:57925"/>
        <dbReference type="ChEBI" id="CHEBI:58173"/>
        <dbReference type="ChEBI" id="CHEBI:456216"/>
        <dbReference type="EC" id="6.3.2.3"/>
    </reaction>
</comment>
<comment type="cofactor">
    <cofactor evidence="1">
        <name>Mg(2+)</name>
        <dbReference type="ChEBI" id="CHEBI:18420"/>
    </cofactor>
    <cofactor evidence="1">
        <name>Mn(2+)</name>
        <dbReference type="ChEBI" id="CHEBI:29035"/>
    </cofactor>
    <text evidence="1">Binds 1 Mg(2+) or Mn(2+) ion per subunit.</text>
</comment>
<comment type="pathway">
    <text evidence="2">Sulfur metabolism; glutathione biosynthesis; glutathione from L-cysteine and L-glutamate: step 2/2.</text>
</comment>
<comment type="similarity">
    <text evidence="2">Belongs to the prokaryotic GSH synthase family.</text>
</comment>
<gene>
    <name evidence="2" type="primary">gshB</name>
    <name type="ordered locus">c3533</name>
</gene>
<sequence length="316" mass="35615">MIKLGIVMDPIANINIKKDSSFAMLLEAQRRGYELHYMEMADLYLINGEARARTRTLSVEQNYDKWYEFTGEQDLPLADLDVILMRKDPPFDTEFIYSTYILERAEDKGTLIVNKPQSLRDCNEKLFTAWFSDLTPETLVTRNKAQLKAFWEKHSDIILKPLDGMGGASIFRVKEGDPNLGVIAETLTEHGTRYCMAQNYLPAIKDGDKRVLVVDGEPVPYCLARIPQGGETRGNLAAGGRGEPRPLTESDWKIARQIGPTLKEKGLIFVGLDIIGDRLTEINVTSPTCIREIEAEFPVSITGMLMDAIEARLQQQ</sequence>
<protein>
    <recommendedName>
        <fullName evidence="2">Glutathione synthetase</fullName>
        <ecNumber evidence="2">6.3.2.3</ecNumber>
    </recommendedName>
    <alternativeName>
        <fullName evidence="2">GSH synthetase</fullName>
        <shortName evidence="2">GSH-S</shortName>
        <shortName evidence="2">GSHase</shortName>
    </alternativeName>
    <alternativeName>
        <fullName evidence="2">Glutathione synthase</fullName>
    </alternativeName>
</protein>
<name>GSHB_ECOL6</name>
<keyword id="KW-0067">ATP-binding</keyword>
<keyword id="KW-0317">Glutathione biosynthesis</keyword>
<keyword id="KW-0436">Ligase</keyword>
<keyword id="KW-0460">Magnesium</keyword>
<keyword id="KW-0464">Manganese</keyword>
<keyword id="KW-0479">Metal-binding</keyword>
<keyword id="KW-0547">Nucleotide-binding</keyword>
<keyword id="KW-1185">Reference proteome</keyword>
<accession>Q8FE30</accession>
<feature type="chain" id="PRO_0000197466" description="Glutathione synthetase">
    <location>
        <begin position="1"/>
        <end position="316"/>
    </location>
</feature>
<feature type="domain" description="ATP-grasp" evidence="2">
    <location>
        <begin position="125"/>
        <end position="310"/>
    </location>
</feature>
<feature type="binding site" evidence="2">
    <location>
        <begin position="151"/>
        <end position="207"/>
    </location>
    <ligand>
        <name>ATP</name>
        <dbReference type="ChEBI" id="CHEBI:30616"/>
    </ligand>
</feature>
<feature type="binding site" evidence="2">
    <location>
        <position position="281"/>
    </location>
    <ligand>
        <name>Mg(2+)</name>
        <dbReference type="ChEBI" id="CHEBI:18420"/>
    </ligand>
</feature>
<feature type="binding site" evidence="2">
    <location>
        <position position="283"/>
    </location>
    <ligand>
        <name>Mg(2+)</name>
        <dbReference type="ChEBI" id="CHEBI:18420"/>
    </ligand>
</feature>
<reference key="1">
    <citation type="journal article" date="2002" name="Proc. Natl. Acad. Sci. U.S.A.">
        <title>Extensive mosaic structure revealed by the complete genome sequence of uropathogenic Escherichia coli.</title>
        <authorList>
            <person name="Welch R.A."/>
            <person name="Burland V."/>
            <person name="Plunkett G. III"/>
            <person name="Redford P."/>
            <person name="Roesch P."/>
            <person name="Rasko D."/>
            <person name="Buckles E.L."/>
            <person name="Liou S.-R."/>
            <person name="Boutin A."/>
            <person name="Hackett J."/>
            <person name="Stroud D."/>
            <person name="Mayhew G.F."/>
            <person name="Rose D.J."/>
            <person name="Zhou S."/>
            <person name="Schwartz D.C."/>
            <person name="Perna N.T."/>
            <person name="Mobley H.L.T."/>
            <person name="Donnenberg M.S."/>
            <person name="Blattner F.R."/>
        </authorList>
    </citation>
    <scope>NUCLEOTIDE SEQUENCE [LARGE SCALE GENOMIC DNA]</scope>
    <source>
        <strain>CFT073 / ATCC 700928 / UPEC</strain>
    </source>
</reference>